<sequence length="403" mass="44468">MADYTIPSELPPILKDLSREVLRHQPADLVQFCHDYFAKLLAQQRKVLMDSADPATKATIASTAGPAVDADEAARANSYAYSTDDGFGTEDDDDDDDDEDDEAAIPPPVVNRGRRTSVSAESMAPTAHDVDAVKTVIPKSDEQRARIQASIGNNFLFRNLDEDQYTDVVNAMAEKKVAAGEVVIRQGGVGDYFYVVETGALDVFVNRNGNGDVKVTDYSAGGSFGELALMYNAPRAATVVATAESVLWALDRVTFRRILMDHTSRKRRMYEAFLEEVPLLSSLEPYERHKIADALESVAYADGDVVIRQGDVGENFYIIEAGDAEVIKIDENGEEHHFRPLHKGNYFGELALLSDKPRVATIRAKGKLKCAKLGKKAFTRLLGPLADIMQRNTQDYEKYPGEH</sequence>
<feature type="chain" id="PRO_0000205402" description="cAMP-dependent protein kinase regulatory subunit">
    <location>
        <begin position="1"/>
        <end position="403"/>
    </location>
</feature>
<feature type="region of interest" description="Dimerization and phosphorylation" evidence="2">
    <location>
        <begin position="1"/>
        <end position="155"/>
    </location>
</feature>
<feature type="region of interest" description="Disordered" evidence="3">
    <location>
        <begin position="79"/>
        <end position="125"/>
    </location>
</feature>
<feature type="compositionally biased region" description="Acidic residues" evidence="3">
    <location>
        <begin position="87"/>
        <end position="103"/>
    </location>
</feature>
<feature type="binding site">
    <location>
        <begin position="156"/>
        <end position="278"/>
    </location>
    <ligand>
        <name>3',5'-cyclic AMP</name>
        <dbReference type="ChEBI" id="CHEBI:58165"/>
        <label>1</label>
    </ligand>
</feature>
<feature type="binding site" evidence="1">
    <location>
        <position position="226"/>
    </location>
    <ligand>
        <name>3',5'-cyclic AMP</name>
        <dbReference type="ChEBI" id="CHEBI:58165"/>
        <label>1</label>
    </ligand>
</feature>
<feature type="binding site" evidence="1">
    <location>
        <position position="235"/>
    </location>
    <ligand>
        <name>3',5'-cyclic AMP</name>
        <dbReference type="ChEBI" id="CHEBI:58165"/>
        <label>1</label>
    </ligand>
</feature>
<feature type="binding site">
    <location>
        <begin position="279"/>
        <end position="403"/>
    </location>
    <ligand>
        <name>3',5'-cyclic AMP</name>
        <dbReference type="ChEBI" id="CHEBI:58165"/>
        <label>2</label>
    </ligand>
</feature>
<feature type="binding site" evidence="1">
    <location>
        <position position="349"/>
    </location>
    <ligand>
        <name>3',5'-cyclic AMP</name>
        <dbReference type="ChEBI" id="CHEBI:58165"/>
        <label>2</label>
    </ligand>
</feature>
<feature type="binding site" evidence="1">
    <location>
        <position position="358"/>
    </location>
    <ligand>
        <name>3',5'-cyclic AMP</name>
        <dbReference type="ChEBI" id="CHEBI:58165"/>
        <label>2</label>
    </ligand>
</feature>
<feature type="modified residue" description="Phosphoserine" evidence="1">
    <location>
        <position position="117"/>
    </location>
</feature>
<feature type="sequence variant">
    <original>K</original>
    <variation>T</variation>
    <location>
        <position position="372"/>
    </location>
</feature>
<keyword id="KW-0114">cAMP</keyword>
<keyword id="KW-0116">cAMP-binding</keyword>
<keyword id="KW-0547">Nucleotide-binding</keyword>
<keyword id="KW-0597">Phosphoprotein</keyword>
<keyword id="KW-0677">Repeat</keyword>
<name>KAPR_BLAEM</name>
<accession>P31320</accession>
<reference key="1">
    <citation type="journal article" date="1992" name="J. Biol. Chem.">
        <title>Cloning and structural analysis of the gene for the regulatory subunit of cAMP-dependent protein kinase in Blastocladiella emersonii.</title>
        <authorList>
            <person name="Marques M.V."/>
            <person name="Gomes S.L."/>
        </authorList>
    </citation>
    <scope>NUCLEOTIDE SEQUENCE [GENOMIC DNA / MRNA]</scope>
</reference>
<gene>
    <name type="primary">PKAR</name>
</gene>
<protein>
    <recommendedName>
        <fullName>cAMP-dependent protein kinase regulatory subunit</fullName>
        <shortName>PKA regulatory subunit</shortName>
    </recommendedName>
</protein>
<comment type="subunit">
    <text>Tetramer, composed of 2 regulatory (R) and 2 catalytic (C) subunits. In the presence of cAMP it dissociates into 2 active monomeric C subunits and an R dimer that binds four cAMP molecules.</text>
</comment>
<comment type="developmental stage">
    <text>Protein kinase activity is low in vegetative cells, rising sharply during sporulation; during germination its activity decreases to its original level.</text>
</comment>
<comment type="similarity">
    <text evidence="4">Belongs to the cAMP-dependent kinase regulatory chain family.</text>
</comment>
<evidence type="ECO:0000250" key="1"/>
<evidence type="ECO:0000255" key="2"/>
<evidence type="ECO:0000256" key="3">
    <source>
        <dbReference type="SAM" id="MobiDB-lite"/>
    </source>
</evidence>
<evidence type="ECO:0000305" key="4"/>
<proteinExistence type="evidence at transcript level"/>
<organism>
    <name type="scientific">Blastocladiella emersonii</name>
    <name type="common">Aquatic fungus</name>
    <dbReference type="NCBI Taxonomy" id="4808"/>
    <lineage>
        <taxon>Eukaryota</taxon>
        <taxon>Fungi</taxon>
        <taxon>Fungi incertae sedis</taxon>
        <taxon>Blastocladiomycota</taxon>
        <taxon>Blastocladiomycetes</taxon>
        <taxon>Blastocladiales</taxon>
        <taxon>Blastocladiaceae</taxon>
        <taxon>Blastocladiella</taxon>
    </lineage>
</organism>
<dbReference type="EMBL" id="M81714">
    <property type="protein sequence ID" value="AAA33016.1"/>
    <property type="molecule type" value="mRNA"/>
</dbReference>
<dbReference type="EMBL" id="M81713">
    <property type="protein sequence ID" value="AAA33015.1"/>
    <property type="molecule type" value="Genomic_DNA"/>
</dbReference>
<dbReference type="PIR" id="A43435">
    <property type="entry name" value="A43435"/>
</dbReference>
<dbReference type="SMR" id="P31320"/>
<dbReference type="GO" id="GO:0005952">
    <property type="term" value="C:cAMP-dependent protein kinase complex"/>
    <property type="evidence" value="ECO:0007669"/>
    <property type="project" value="InterPro"/>
</dbReference>
<dbReference type="GO" id="GO:0005829">
    <property type="term" value="C:cytosol"/>
    <property type="evidence" value="ECO:0007669"/>
    <property type="project" value="TreeGrafter"/>
</dbReference>
<dbReference type="GO" id="GO:0005634">
    <property type="term" value="C:nucleus"/>
    <property type="evidence" value="ECO:0007669"/>
    <property type="project" value="TreeGrafter"/>
</dbReference>
<dbReference type="GO" id="GO:0030552">
    <property type="term" value="F:cAMP binding"/>
    <property type="evidence" value="ECO:0007669"/>
    <property type="project" value="UniProtKB-KW"/>
</dbReference>
<dbReference type="GO" id="GO:0004862">
    <property type="term" value="F:cAMP-dependent protein kinase inhibitor activity"/>
    <property type="evidence" value="ECO:0007669"/>
    <property type="project" value="TreeGrafter"/>
</dbReference>
<dbReference type="GO" id="GO:0034236">
    <property type="term" value="F:protein kinase A catalytic subunit binding"/>
    <property type="evidence" value="ECO:0007669"/>
    <property type="project" value="TreeGrafter"/>
</dbReference>
<dbReference type="CDD" id="cd00038">
    <property type="entry name" value="CAP_ED"/>
    <property type="match status" value="2"/>
</dbReference>
<dbReference type="CDD" id="cd12098">
    <property type="entry name" value="DD_R_ScPKA-like"/>
    <property type="match status" value="1"/>
</dbReference>
<dbReference type="FunFam" id="2.60.120.10:FF:000039">
    <property type="entry name" value="cAMP-dependent protein kinase regulatory subunit"/>
    <property type="match status" value="1"/>
</dbReference>
<dbReference type="FunFam" id="2.60.120.10:FF:000006">
    <property type="entry name" value="cAMP-dependent protein kinase type I-alpha regulatory subunit"/>
    <property type="match status" value="1"/>
</dbReference>
<dbReference type="Gene3D" id="1.20.890.10">
    <property type="entry name" value="cAMP-dependent protein kinase regulatory subunit, dimerization-anchoring domain"/>
    <property type="match status" value="1"/>
</dbReference>
<dbReference type="Gene3D" id="2.60.120.10">
    <property type="entry name" value="Jelly Rolls"/>
    <property type="match status" value="2"/>
</dbReference>
<dbReference type="InterPro" id="IPR050503">
    <property type="entry name" value="cAMP-dep_PK_reg_su-like"/>
</dbReference>
<dbReference type="InterPro" id="IPR012198">
    <property type="entry name" value="cAMP_dep_PK_reg_su"/>
</dbReference>
<dbReference type="InterPro" id="IPR003117">
    <property type="entry name" value="cAMP_dep_PK_reg_su_I/II_a/b"/>
</dbReference>
<dbReference type="InterPro" id="IPR018488">
    <property type="entry name" value="cNMP-bd_CS"/>
</dbReference>
<dbReference type="InterPro" id="IPR000595">
    <property type="entry name" value="cNMP-bd_dom"/>
</dbReference>
<dbReference type="InterPro" id="IPR018490">
    <property type="entry name" value="cNMP-bd_dom_sf"/>
</dbReference>
<dbReference type="InterPro" id="IPR014710">
    <property type="entry name" value="RmlC-like_jellyroll"/>
</dbReference>
<dbReference type="PANTHER" id="PTHR11635">
    <property type="entry name" value="CAMP-DEPENDENT PROTEIN KINASE REGULATORY CHAIN"/>
    <property type="match status" value="1"/>
</dbReference>
<dbReference type="PANTHER" id="PTHR11635:SF152">
    <property type="entry name" value="CAMP-DEPENDENT PROTEIN KINASE TYPE I REGULATORY SUBUNIT-RELATED"/>
    <property type="match status" value="1"/>
</dbReference>
<dbReference type="Pfam" id="PF00027">
    <property type="entry name" value="cNMP_binding"/>
    <property type="match status" value="2"/>
</dbReference>
<dbReference type="Pfam" id="PF02197">
    <property type="entry name" value="RIIa"/>
    <property type="match status" value="1"/>
</dbReference>
<dbReference type="PIRSF" id="PIRSF000548">
    <property type="entry name" value="PK_regulatory"/>
    <property type="match status" value="1"/>
</dbReference>
<dbReference type="PRINTS" id="PR00103">
    <property type="entry name" value="CAMPKINASE"/>
</dbReference>
<dbReference type="SMART" id="SM00100">
    <property type="entry name" value="cNMP"/>
    <property type="match status" value="2"/>
</dbReference>
<dbReference type="SMART" id="SM00394">
    <property type="entry name" value="RIIa"/>
    <property type="match status" value="1"/>
</dbReference>
<dbReference type="SUPFAM" id="SSF51206">
    <property type="entry name" value="cAMP-binding domain-like"/>
    <property type="match status" value="2"/>
</dbReference>
<dbReference type="SUPFAM" id="SSF47391">
    <property type="entry name" value="Dimerization-anchoring domain of cAMP-dependent PK regulatory subunit"/>
    <property type="match status" value="1"/>
</dbReference>
<dbReference type="PROSITE" id="PS00888">
    <property type="entry name" value="CNMP_BINDING_1"/>
    <property type="match status" value="1"/>
</dbReference>
<dbReference type="PROSITE" id="PS00889">
    <property type="entry name" value="CNMP_BINDING_2"/>
    <property type="match status" value="1"/>
</dbReference>
<dbReference type="PROSITE" id="PS50042">
    <property type="entry name" value="CNMP_BINDING_3"/>
    <property type="match status" value="2"/>
</dbReference>